<gene>
    <name evidence="1" type="primary">queA</name>
    <name type="ordered locus">plu3905</name>
</gene>
<dbReference type="EC" id="2.4.99.17" evidence="1"/>
<dbReference type="EMBL" id="BX571872">
    <property type="protein sequence ID" value="CAE16277.1"/>
    <property type="molecule type" value="Genomic_DNA"/>
</dbReference>
<dbReference type="RefSeq" id="WP_011148040.1">
    <property type="nucleotide sequence ID" value="NC_005126.1"/>
</dbReference>
<dbReference type="SMR" id="Q7N0I3"/>
<dbReference type="STRING" id="243265.plu3905"/>
<dbReference type="GeneID" id="48850134"/>
<dbReference type="KEGG" id="plu:plu3905"/>
<dbReference type="eggNOG" id="COG0809">
    <property type="taxonomic scope" value="Bacteria"/>
</dbReference>
<dbReference type="HOGENOM" id="CLU_039110_1_0_6"/>
<dbReference type="OrthoDB" id="9805933at2"/>
<dbReference type="UniPathway" id="UPA00392"/>
<dbReference type="Proteomes" id="UP000002514">
    <property type="component" value="Chromosome"/>
</dbReference>
<dbReference type="GO" id="GO:0005737">
    <property type="term" value="C:cytoplasm"/>
    <property type="evidence" value="ECO:0007669"/>
    <property type="project" value="UniProtKB-SubCell"/>
</dbReference>
<dbReference type="GO" id="GO:0051075">
    <property type="term" value="F:S-adenosylmethionine:tRNA ribosyltransferase-isomerase activity"/>
    <property type="evidence" value="ECO:0007669"/>
    <property type="project" value="UniProtKB-EC"/>
</dbReference>
<dbReference type="GO" id="GO:0008616">
    <property type="term" value="P:queuosine biosynthetic process"/>
    <property type="evidence" value="ECO:0007669"/>
    <property type="project" value="UniProtKB-UniRule"/>
</dbReference>
<dbReference type="GO" id="GO:0002099">
    <property type="term" value="P:tRNA wobble guanine modification"/>
    <property type="evidence" value="ECO:0007669"/>
    <property type="project" value="TreeGrafter"/>
</dbReference>
<dbReference type="FunFam" id="2.40.10.240:FF:000001">
    <property type="entry name" value="S-adenosylmethionine:tRNA ribosyltransferase-isomerase"/>
    <property type="match status" value="1"/>
</dbReference>
<dbReference type="FunFam" id="3.40.1780.10:FF:000001">
    <property type="entry name" value="S-adenosylmethionine:tRNA ribosyltransferase-isomerase"/>
    <property type="match status" value="1"/>
</dbReference>
<dbReference type="Gene3D" id="2.40.10.240">
    <property type="entry name" value="QueA-like"/>
    <property type="match status" value="1"/>
</dbReference>
<dbReference type="Gene3D" id="3.40.1780.10">
    <property type="entry name" value="QueA-like"/>
    <property type="match status" value="1"/>
</dbReference>
<dbReference type="HAMAP" id="MF_00113">
    <property type="entry name" value="QueA"/>
    <property type="match status" value="1"/>
</dbReference>
<dbReference type="InterPro" id="IPR003699">
    <property type="entry name" value="QueA"/>
</dbReference>
<dbReference type="InterPro" id="IPR042118">
    <property type="entry name" value="QueA_dom1"/>
</dbReference>
<dbReference type="InterPro" id="IPR042119">
    <property type="entry name" value="QueA_dom2"/>
</dbReference>
<dbReference type="InterPro" id="IPR036100">
    <property type="entry name" value="QueA_sf"/>
</dbReference>
<dbReference type="NCBIfam" id="NF001140">
    <property type="entry name" value="PRK00147.1"/>
    <property type="match status" value="1"/>
</dbReference>
<dbReference type="NCBIfam" id="TIGR00113">
    <property type="entry name" value="queA"/>
    <property type="match status" value="1"/>
</dbReference>
<dbReference type="PANTHER" id="PTHR30307">
    <property type="entry name" value="S-ADENOSYLMETHIONINE:TRNA RIBOSYLTRANSFERASE-ISOMERASE"/>
    <property type="match status" value="1"/>
</dbReference>
<dbReference type="PANTHER" id="PTHR30307:SF0">
    <property type="entry name" value="S-ADENOSYLMETHIONINE:TRNA RIBOSYLTRANSFERASE-ISOMERASE"/>
    <property type="match status" value="1"/>
</dbReference>
<dbReference type="Pfam" id="PF02547">
    <property type="entry name" value="Queuosine_synth"/>
    <property type="match status" value="1"/>
</dbReference>
<dbReference type="SUPFAM" id="SSF111337">
    <property type="entry name" value="QueA-like"/>
    <property type="match status" value="1"/>
</dbReference>
<evidence type="ECO:0000255" key="1">
    <source>
        <dbReference type="HAMAP-Rule" id="MF_00113"/>
    </source>
</evidence>
<organism>
    <name type="scientific">Photorhabdus laumondii subsp. laumondii (strain DSM 15139 / CIP 105565 / TT01)</name>
    <name type="common">Photorhabdus luminescens subsp. laumondii</name>
    <dbReference type="NCBI Taxonomy" id="243265"/>
    <lineage>
        <taxon>Bacteria</taxon>
        <taxon>Pseudomonadati</taxon>
        <taxon>Pseudomonadota</taxon>
        <taxon>Gammaproteobacteria</taxon>
        <taxon>Enterobacterales</taxon>
        <taxon>Morganellaceae</taxon>
        <taxon>Photorhabdus</taxon>
    </lineage>
</organism>
<keyword id="KW-0963">Cytoplasm</keyword>
<keyword id="KW-0671">Queuosine biosynthesis</keyword>
<keyword id="KW-1185">Reference proteome</keyword>
<keyword id="KW-0949">S-adenosyl-L-methionine</keyword>
<keyword id="KW-0808">Transferase</keyword>
<reference key="1">
    <citation type="journal article" date="2003" name="Nat. Biotechnol.">
        <title>The genome sequence of the entomopathogenic bacterium Photorhabdus luminescens.</title>
        <authorList>
            <person name="Duchaud E."/>
            <person name="Rusniok C."/>
            <person name="Frangeul L."/>
            <person name="Buchrieser C."/>
            <person name="Givaudan A."/>
            <person name="Taourit S."/>
            <person name="Bocs S."/>
            <person name="Boursaux-Eude C."/>
            <person name="Chandler M."/>
            <person name="Charles J.-F."/>
            <person name="Dassa E."/>
            <person name="Derose R."/>
            <person name="Derzelle S."/>
            <person name="Freyssinet G."/>
            <person name="Gaudriault S."/>
            <person name="Medigue C."/>
            <person name="Lanois A."/>
            <person name="Powell K."/>
            <person name="Siguier P."/>
            <person name="Vincent R."/>
            <person name="Wingate V."/>
            <person name="Zouine M."/>
            <person name="Glaser P."/>
            <person name="Boemare N."/>
            <person name="Danchin A."/>
            <person name="Kunst F."/>
        </authorList>
    </citation>
    <scope>NUCLEOTIDE SEQUENCE [LARGE SCALE GENOMIC DNA]</scope>
    <source>
        <strain>DSM 15139 / CIP 105565 / TT01</strain>
    </source>
</reference>
<proteinExistence type="inferred from homology"/>
<accession>Q7N0I3</accession>
<sequence>MRVSDFTFELPDEMIAHYPQPQRSGCRLLSLDGETGALTHGIFTDVLDKLNAGDLLVFNNTRVIPARIFGRKATGGKLEVLVERVLDDKRVLAHVRASKAPKEGTELLLGDNESLKATMLARHDTLFEIRFDDERDVLSILDDIGHMPLPPYINRPDEEADRELYQTVYSERPGAVAAPTAGLHFDEPLLEALRKKGVEMVFVTLHVGAGTFQPVRVETIEDHIMHAEYAEVPQDVVDAVLACKARGNKVVAVGTTSVRSLESAAKACQDELIAPFFNDTQIFIYPGFEYQVVDALITNFHLPESTLIMLVSAFAGYKNTMNAYQEAVAEKYRFFSYGDAMFIRRNPFACKEKIS</sequence>
<protein>
    <recommendedName>
        <fullName evidence="1">S-adenosylmethionine:tRNA ribosyltransferase-isomerase</fullName>
        <ecNumber evidence="1">2.4.99.17</ecNumber>
    </recommendedName>
    <alternativeName>
        <fullName evidence="1">Queuosine biosynthesis protein QueA</fullName>
    </alternativeName>
</protein>
<feature type="chain" id="PRO_0000165421" description="S-adenosylmethionine:tRNA ribosyltransferase-isomerase">
    <location>
        <begin position="1"/>
        <end position="355"/>
    </location>
</feature>
<name>QUEA_PHOLL</name>
<comment type="function">
    <text evidence="1">Transfers and isomerizes the ribose moiety from AdoMet to the 7-aminomethyl group of 7-deazaguanine (preQ1-tRNA) to give epoxyqueuosine (oQ-tRNA).</text>
</comment>
<comment type="catalytic activity">
    <reaction evidence="1">
        <text>7-aminomethyl-7-carbaguanosine(34) in tRNA + S-adenosyl-L-methionine = epoxyqueuosine(34) in tRNA + adenine + L-methionine + 2 H(+)</text>
        <dbReference type="Rhea" id="RHEA:32155"/>
        <dbReference type="Rhea" id="RHEA-COMP:10342"/>
        <dbReference type="Rhea" id="RHEA-COMP:18582"/>
        <dbReference type="ChEBI" id="CHEBI:15378"/>
        <dbReference type="ChEBI" id="CHEBI:16708"/>
        <dbReference type="ChEBI" id="CHEBI:57844"/>
        <dbReference type="ChEBI" id="CHEBI:59789"/>
        <dbReference type="ChEBI" id="CHEBI:82833"/>
        <dbReference type="ChEBI" id="CHEBI:194443"/>
        <dbReference type="EC" id="2.4.99.17"/>
    </reaction>
</comment>
<comment type="pathway">
    <text evidence="1">tRNA modification; tRNA-queuosine biosynthesis.</text>
</comment>
<comment type="subunit">
    <text evidence="1">Monomer.</text>
</comment>
<comment type="subcellular location">
    <subcellularLocation>
        <location evidence="1">Cytoplasm</location>
    </subcellularLocation>
</comment>
<comment type="similarity">
    <text evidence="1">Belongs to the QueA family.</text>
</comment>